<name>PALS2_HUMAN</name>
<feature type="chain" id="PRO_0000094584" description="Protein PALS2">
    <location>
        <begin position="1"/>
        <end position="540"/>
    </location>
</feature>
<feature type="domain" description="L27 1" evidence="5">
    <location>
        <begin position="1"/>
        <end position="48"/>
    </location>
</feature>
<feature type="domain" description="L27 2" evidence="5">
    <location>
        <begin position="49"/>
        <end position="107"/>
    </location>
</feature>
<feature type="domain" description="PDZ" evidence="3">
    <location>
        <begin position="130"/>
        <end position="209"/>
    </location>
</feature>
<feature type="domain" description="SH3" evidence="4">
    <location>
        <begin position="215"/>
        <end position="284"/>
    </location>
</feature>
<feature type="domain" description="Guanylate kinase-like" evidence="2">
    <location>
        <begin position="338"/>
        <end position="525"/>
    </location>
</feature>
<feature type="modified residue" description="Phosphotyrosine" evidence="9">
    <location>
        <position position="500"/>
    </location>
</feature>
<feature type="sequence conflict" description="In Ref. 1; AAD45919." evidence="7" ref="1">
    <original>H</original>
    <variation>R</variation>
    <location>
        <position position="41"/>
    </location>
</feature>
<evidence type="ECO:0000250" key="1"/>
<evidence type="ECO:0000255" key="2">
    <source>
        <dbReference type="PROSITE-ProRule" id="PRU00100"/>
    </source>
</evidence>
<evidence type="ECO:0000255" key="3">
    <source>
        <dbReference type="PROSITE-ProRule" id="PRU00143"/>
    </source>
</evidence>
<evidence type="ECO:0000255" key="4">
    <source>
        <dbReference type="PROSITE-ProRule" id="PRU00192"/>
    </source>
</evidence>
<evidence type="ECO:0000255" key="5">
    <source>
        <dbReference type="PROSITE-ProRule" id="PRU00365"/>
    </source>
</evidence>
<evidence type="ECO:0000303" key="6">
    <source>
    </source>
</evidence>
<evidence type="ECO:0000305" key="7"/>
<evidence type="ECO:0000312" key="8">
    <source>
        <dbReference type="HGNC" id="HGNC:18167"/>
    </source>
</evidence>
<evidence type="ECO:0007744" key="9">
    <source>
    </source>
</evidence>
<keyword id="KW-0472">Membrane</keyword>
<keyword id="KW-0597">Phosphoprotein</keyword>
<keyword id="KW-1267">Proteomics identification</keyword>
<keyword id="KW-1185">Reference proteome</keyword>
<keyword id="KW-0677">Repeat</keyword>
<keyword id="KW-0728">SH3 domain</keyword>
<sequence length="540" mass="61117">MQQVLENLTELPSSTGAEEIDLIFLKGIMENPIVKSLAKAHERLEDSKLEAVSDNNLELVNEILEDITPLINVDENVAELVGILKEPHFQSLLEAHDIVASKCYDSPPSSPEMNNSSINNQLLPVDAIRILGIHKRAGEPLGVTFRVENNDLVIARILHGGMIDRQGLLHVGDIIKEVNGHEVGNNPKELQELLKNISGSVTLKILPSYRDTITPQQVFVKCHFDYNPYNDNLIPCKEAGLKFSKGEILQIVNREDPNWWQASHVKEGGSAGLIPSQFLEEKRKAFVRRDWDNSGPFCGTISSKKKKKMMYLTTRNAEFDRHEIQIYEEVAKMPPFQRKTLVLIGAQGVGRRSLKNRFIVLNPTRFGTTVPFTSRKPREDEKDGQAYKFVSRSEMEADIKAGKYLEHGEYEGNLYGTKIDSILEVVQTGRTCILDVNPQALKVLRTSEFMPYVVFIAAPELETLRAMHKAVVDAGITTKLLTDSDLKKTVDESARIQRAYNHYFDLIIINDNLDKAFEKLQTAIEKLRMEPQWVPISWVY</sequence>
<gene>
    <name evidence="8" type="primary">PALS2</name>
    <name type="synonym">MPP6</name>
    <name type="synonym">VAM1</name>
</gene>
<comment type="subunit">
    <text evidence="1">Interacts with CADM1 (By similarity). Interacts with the LIN7 proteins.</text>
</comment>
<comment type="interaction">
    <interactant intactId="EBI-2683764">
        <id>Q9NZW5</id>
    </interactant>
    <interactant intactId="EBI-2513988">
        <id>O14910</id>
        <label>LIN7A</label>
    </interactant>
    <organismsDiffer>false</organismsDiffer>
    <experiments>4</experiments>
</comment>
<comment type="interaction">
    <interactant intactId="EBI-2683764">
        <id>Q9NZW5</id>
    </interactant>
    <interactant intactId="EBI-821335">
        <id>Q9HAP6</id>
        <label>LIN7B</label>
    </interactant>
    <organismsDiffer>false</organismsDiffer>
    <experiments>7</experiments>
</comment>
<comment type="interaction">
    <interactant intactId="EBI-2683764">
        <id>Q9NZW5</id>
    </interactant>
    <interactant intactId="EBI-1171517">
        <id>Q9NUP9</id>
        <label>LIN7C</label>
    </interactant>
    <organismsDiffer>false</organismsDiffer>
    <experiments>8</experiments>
</comment>
<comment type="subcellular location">
    <subcellularLocation>
        <location evidence="1">Membrane</location>
        <topology evidence="1">Peripheral membrane protein</topology>
    </subcellularLocation>
</comment>
<comment type="tissue specificity">
    <text>Abundant in testis, brain, and kidney with lower levels detectable in other tissues.</text>
</comment>
<comment type="similarity">
    <text evidence="7">Belongs to the MAGUK family.</text>
</comment>
<organism>
    <name type="scientific">Homo sapiens</name>
    <name type="common">Human</name>
    <dbReference type="NCBI Taxonomy" id="9606"/>
    <lineage>
        <taxon>Eukaryota</taxon>
        <taxon>Metazoa</taxon>
        <taxon>Chordata</taxon>
        <taxon>Craniata</taxon>
        <taxon>Vertebrata</taxon>
        <taxon>Euteleostomi</taxon>
        <taxon>Mammalia</taxon>
        <taxon>Eutheria</taxon>
        <taxon>Euarchontoglires</taxon>
        <taxon>Primates</taxon>
        <taxon>Haplorrhini</taxon>
        <taxon>Catarrhini</taxon>
        <taxon>Hominidae</taxon>
        <taxon>Homo</taxon>
    </lineage>
</organism>
<dbReference type="EMBL" id="AF162130">
    <property type="protein sequence ID" value="AAD45919.2"/>
    <property type="molecule type" value="mRNA"/>
</dbReference>
<dbReference type="EMBL" id="AL136836">
    <property type="protein sequence ID" value="CAB66770.1"/>
    <property type="molecule type" value="mRNA"/>
</dbReference>
<dbReference type="EMBL" id="AC005084">
    <property type="protein sequence ID" value="AAQ96847.1"/>
    <property type="molecule type" value="Genomic_DNA"/>
</dbReference>
<dbReference type="EMBL" id="CH236948">
    <property type="protein sequence ID" value="EAL24247.1"/>
    <property type="molecule type" value="Genomic_DNA"/>
</dbReference>
<dbReference type="EMBL" id="CH471073">
    <property type="protein sequence ID" value="EAW93810.1"/>
    <property type="molecule type" value="Genomic_DNA"/>
</dbReference>
<dbReference type="EMBL" id="BC023638">
    <property type="protein sequence ID" value="AAH23638.1"/>
    <property type="molecule type" value="mRNA"/>
</dbReference>
<dbReference type="CCDS" id="CCDS5388.1"/>
<dbReference type="RefSeq" id="NP_001289966.1">
    <property type="nucleotide sequence ID" value="NM_001303037.2"/>
</dbReference>
<dbReference type="RefSeq" id="NP_057531.2">
    <property type="nucleotide sequence ID" value="NM_016447.3"/>
</dbReference>
<dbReference type="RefSeq" id="XP_006715801.1">
    <property type="nucleotide sequence ID" value="XM_006715738.4"/>
</dbReference>
<dbReference type="RefSeq" id="XP_006715802.1">
    <property type="nucleotide sequence ID" value="XM_006715739.4"/>
</dbReference>
<dbReference type="RefSeq" id="XP_006715803.1">
    <property type="nucleotide sequence ID" value="XM_006715740.4"/>
</dbReference>
<dbReference type="RefSeq" id="XP_011513727.1">
    <property type="nucleotide sequence ID" value="XM_011515425.3"/>
</dbReference>
<dbReference type="RefSeq" id="XP_016867804.1">
    <property type="nucleotide sequence ID" value="XM_017012315.2"/>
</dbReference>
<dbReference type="RefSeq" id="XP_016867805.1">
    <property type="nucleotide sequence ID" value="XM_017012316.3"/>
</dbReference>
<dbReference type="RefSeq" id="XP_016867806.1">
    <property type="nucleotide sequence ID" value="XM_017012317.1"/>
</dbReference>
<dbReference type="RefSeq" id="XP_054214368.1">
    <property type="nucleotide sequence ID" value="XM_054358393.1"/>
</dbReference>
<dbReference type="RefSeq" id="XP_054214369.1">
    <property type="nucleotide sequence ID" value="XM_054358394.1"/>
</dbReference>
<dbReference type="RefSeq" id="XP_054214370.1">
    <property type="nucleotide sequence ID" value="XM_054358395.1"/>
</dbReference>
<dbReference type="RefSeq" id="XP_054214371.1">
    <property type="nucleotide sequence ID" value="XM_054358396.1"/>
</dbReference>
<dbReference type="RefSeq" id="XP_054214372.1">
    <property type="nucleotide sequence ID" value="XM_054358397.1"/>
</dbReference>
<dbReference type="RefSeq" id="XP_054214373.1">
    <property type="nucleotide sequence ID" value="XM_054358398.1"/>
</dbReference>
<dbReference type="SMR" id="Q9NZW5"/>
<dbReference type="BioGRID" id="119675">
    <property type="interactions" value="78"/>
</dbReference>
<dbReference type="CORUM" id="Q9NZW5"/>
<dbReference type="FunCoup" id="Q9NZW5">
    <property type="interactions" value="225"/>
</dbReference>
<dbReference type="IntAct" id="Q9NZW5">
    <property type="interactions" value="34"/>
</dbReference>
<dbReference type="STRING" id="9606.ENSP00000222644"/>
<dbReference type="GlyGen" id="Q9NZW5">
    <property type="glycosylation" value="2 sites, 1 N-linked glycan (1 site), 1 O-linked glycan (1 site)"/>
</dbReference>
<dbReference type="iPTMnet" id="Q9NZW5"/>
<dbReference type="MetOSite" id="Q9NZW5"/>
<dbReference type="PhosphoSitePlus" id="Q9NZW5"/>
<dbReference type="SwissPalm" id="Q9NZW5"/>
<dbReference type="BioMuta" id="MPP6"/>
<dbReference type="DMDM" id="42560556"/>
<dbReference type="jPOST" id="Q9NZW5"/>
<dbReference type="MassIVE" id="Q9NZW5"/>
<dbReference type="PaxDb" id="9606-ENSP00000222644"/>
<dbReference type="PeptideAtlas" id="Q9NZW5"/>
<dbReference type="ProteomicsDB" id="83523"/>
<dbReference type="Pumba" id="Q9NZW5"/>
<dbReference type="Antibodypedia" id="12204">
    <property type="antibodies" value="246 antibodies from 34 providers"/>
</dbReference>
<dbReference type="DNASU" id="51678"/>
<dbReference type="Ensembl" id="ENST00000222644.10">
    <property type="protein sequence ID" value="ENSP00000222644.4"/>
    <property type="gene ID" value="ENSG00000105926.16"/>
</dbReference>
<dbReference type="Ensembl" id="ENST00000396475.6">
    <property type="protein sequence ID" value="ENSP00000379737.2"/>
    <property type="gene ID" value="ENSG00000105926.16"/>
</dbReference>
<dbReference type="GeneID" id="51678"/>
<dbReference type="KEGG" id="hsa:51678"/>
<dbReference type="MANE-Select" id="ENST00000222644.10">
    <property type="protein sequence ID" value="ENSP00000222644.4"/>
    <property type="RefSeq nucleotide sequence ID" value="NM_001303037.2"/>
    <property type="RefSeq protein sequence ID" value="NP_001289966.1"/>
</dbReference>
<dbReference type="UCSC" id="uc003swx.4">
    <property type="organism name" value="human"/>
</dbReference>
<dbReference type="AGR" id="HGNC:18167"/>
<dbReference type="CTD" id="51678"/>
<dbReference type="DisGeNET" id="51678"/>
<dbReference type="GeneCards" id="PALS2"/>
<dbReference type="HGNC" id="HGNC:18167">
    <property type="gene designation" value="PALS2"/>
</dbReference>
<dbReference type="HPA" id="ENSG00000105926">
    <property type="expression patterns" value="Tissue enhanced (gallbladder, testis)"/>
</dbReference>
<dbReference type="MIM" id="606959">
    <property type="type" value="gene"/>
</dbReference>
<dbReference type="neXtProt" id="NX_Q9NZW5"/>
<dbReference type="OpenTargets" id="ENSG00000105926"/>
<dbReference type="VEuPathDB" id="HostDB:ENSG00000105926"/>
<dbReference type="eggNOG" id="KOG0609">
    <property type="taxonomic scope" value="Eukaryota"/>
</dbReference>
<dbReference type="GeneTree" id="ENSGT00940000158500"/>
<dbReference type="InParanoid" id="Q9NZW5"/>
<dbReference type="OMA" id="NPTTPHK"/>
<dbReference type="OrthoDB" id="65789at2759"/>
<dbReference type="PAN-GO" id="Q9NZW5">
    <property type="GO annotations" value="2 GO annotations based on evolutionary models"/>
</dbReference>
<dbReference type="PhylomeDB" id="Q9NZW5"/>
<dbReference type="TreeFam" id="TF314263"/>
<dbReference type="PathwayCommons" id="Q9NZW5"/>
<dbReference type="SignaLink" id="Q9NZW5"/>
<dbReference type="BioGRID-ORCS" id="51678">
    <property type="hits" value="35 hits in 1157 CRISPR screens"/>
</dbReference>
<dbReference type="CD-CODE" id="FB4E32DD">
    <property type="entry name" value="Presynaptic clusters and postsynaptic densities"/>
</dbReference>
<dbReference type="ChiTaRS" id="MPP6">
    <property type="organism name" value="human"/>
</dbReference>
<dbReference type="GeneWiki" id="MPP6"/>
<dbReference type="GenomeRNAi" id="51678"/>
<dbReference type="Pharos" id="Q9NZW5">
    <property type="development level" value="Tbio"/>
</dbReference>
<dbReference type="PRO" id="PR:Q9NZW5"/>
<dbReference type="Proteomes" id="UP000005640">
    <property type="component" value="Chromosome 7"/>
</dbReference>
<dbReference type="RNAct" id="Q9NZW5">
    <property type="molecule type" value="protein"/>
</dbReference>
<dbReference type="Bgee" id="ENSG00000105926">
    <property type="expression patterns" value="Expressed in calcaneal tendon and 118 other cell types or tissues"/>
</dbReference>
<dbReference type="ExpressionAtlas" id="Q9NZW5">
    <property type="expression patterns" value="baseline and differential"/>
</dbReference>
<dbReference type="GO" id="GO:0005911">
    <property type="term" value="C:cell-cell junction"/>
    <property type="evidence" value="ECO:0000318"/>
    <property type="project" value="GO_Central"/>
</dbReference>
<dbReference type="GO" id="GO:0070062">
    <property type="term" value="C:extracellular exosome"/>
    <property type="evidence" value="ECO:0007005"/>
    <property type="project" value="UniProtKB"/>
</dbReference>
<dbReference type="GO" id="GO:0016020">
    <property type="term" value="C:membrane"/>
    <property type="evidence" value="ECO:0000303"/>
    <property type="project" value="UniProtKB"/>
</dbReference>
<dbReference type="GO" id="GO:0005886">
    <property type="term" value="C:plasma membrane"/>
    <property type="evidence" value="ECO:0000318"/>
    <property type="project" value="GO_Central"/>
</dbReference>
<dbReference type="GO" id="GO:0065003">
    <property type="term" value="P:protein-containing complex assembly"/>
    <property type="evidence" value="ECO:0000303"/>
    <property type="project" value="UniProtKB"/>
</dbReference>
<dbReference type="CDD" id="cd00071">
    <property type="entry name" value="GMPK"/>
    <property type="match status" value="1"/>
</dbReference>
<dbReference type="CDD" id="cd10832">
    <property type="entry name" value="PDZ_MPP6-MPP2-like"/>
    <property type="match status" value="1"/>
</dbReference>
<dbReference type="CDD" id="cd12038">
    <property type="entry name" value="SH3_MPP6"/>
    <property type="match status" value="1"/>
</dbReference>
<dbReference type="FunFam" id="3.30.63.10:FF:000002">
    <property type="entry name" value="Guanylate kinase 1"/>
    <property type="match status" value="1"/>
</dbReference>
<dbReference type="FunFam" id="2.30.30.40:FF:000069">
    <property type="entry name" value="MAGUK p55 subfamily member 6"/>
    <property type="match status" value="1"/>
</dbReference>
<dbReference type="FunFam" id="2.30.42.10:FF:000047">
    <property type="entry name" value="MAGUK p55 subfamily member 6"/>
    <property type="match status" value="1"/>
</dbReference>
<dbReference type="FunFam" id="3.40.50.300:FF:000146">
    <property type="entry name" value="MAGUK p55 subfamily member 6 isoform X1"/>
    <property type="match status" value="1"/>
</dbReference>
<dbReference type="Gene3D" id="2.30.42.10">
    <property type="match status" value="1"/>
</dbReference>
<dbReference type="Gene3D" id="1.10.287.650">
    <property type="entry name" value="L27 domain"/>
    <property type="match status" value="1"/>
</dbReference>
<dbReference type="Gene3D" id="3.40.50.300">
    <property type="entry name" value="P-loop containing nucleotide triphosphate hydrolases"/>
    <property type="match status" value="1"/>
</dbReference>
<dbReference type="Gene3D" id="2.30.30.40">
    <property type="entry name" value="SH3 Domains"/>
    <property type="match status" value="1"/>
</dbReference>
<dbReference type="InterPro" id="IPR008145">
    <property type="entry name" value="GK/Ca_channel_bsu"/>
</dbReference>
<dbReference type="InterPro" id="IPR008144">
    <property type="entry name" value="Guanylate_kin-like_dom"/>
</dbReference>
<dbReference type="InterPro" id="IPR020590">
    <property type="entry name" value="Guanylate_kinase_CS"/>
</dbReference>
<dbReference type="InterPro" id="IPR014775">
    <property type="entry name" value="L27_C"/>
</dbReference>
<dbReference type="InterPro" id="IPR004172">
    <property type="entry name" value="L27_dom"/>
</dbReference>
<dbReference type="InterPro" id="IPR036892">
    <property type="entry name" value="L27_dom_sf"/>
</dbReference>
<dbReference type="InterPro" id="IPR050716">
    <property type="entry name" value="MAGUK"/>
</dbReference>
<dbReference type="InterPro" id="IPR035603">
    <property type="entry name" value="MPP6_SH3"/>
</dbReference>
<dbReference type="InterPro" id="IPR027417">
    <property type="entry name" value="P-loop_NTPase"/>
</dbReference>
<dbReference type="InterPro" id="IPR001478">
    <property type="entry name" value="PDZ"/>
</dbReference>
<dbReference type="InterPro" id="IPR036034">
    <property type="entry name" value="PDZ_sf"/>
</dbReference>
<dbReference type="InterPro" id="IPR036028">
    <property type="entry name" value="SH3-like_dom_sf"/>
</dbReference>
<dbReference type="InterPro" id="IPR001452">
    <property type="entry name" value="SH3_domain"/>
</dbReference>
<dbReference type="PANTHER" id="PTHR23122">
    <property type="entry name" value="MEMBRANE-ASSOCIATED GUANYLATE KINASE MAGUK"/>
    <property type="match status" value="1"/>
</dbReference>
<dbReference type="Pfam" id="PF00625">
    <property type="entry name" value="Guanylate_kin"/>
    <property type="match status" value="1"/>
</dbReference>
<dbReference type="Pfam" id="PF02828">
    <property type="entry name" value="L27"/>
    <property type="match status" value="2"/>
</dbReference>
<dbReference type="Pfam" id="PF00595">
    <property type="entry name" value="PDZ"/>
    <property type="match status" value="1"/>
</dbReference>
<dbReference type="Pfam" id="PF07653">
    <property type="entry name" value="SH3_2"/>
    <property type="match status" value="1"/>
</dbReference>
<dbReference type="SMART" id="SM00072">
    <property type="entry name" value="GuKc"/>
    <property type="match status" value="1"/>
</dbReference>
<dbReference type="SMART" id="SM00569">
    <property type="entry name" value="L27"/>
    <property type="match status" value="2"/>
</dbReference>
<dbReference type="SMART" id="SM00228">
    <property type="entry name" value="PDZ"/>
    <property type="match status" value="1"/>
</dbReference>
<dbReference type="SMART" id="SM00326">
    <property type="entry name" value="SH3"/>
    <property type="match status" value="1"/>
</dbReference>
<dbReference type="SUPFAM" id="SSF101288">
    <property type="entry name" value="L27 domain"/>
    <property type="match status" value="1"/>
</dbReference>
<dbReference type="SUPFAM" id="SSF52540">
    <property type="entry name" value="P-loop containing nucleoside triphosphate hydrolases"/>
    <property type="match status" value="1"/>
</dbReference>
<dbReference type="SUPFAM" id="SSF50156">
    <property type="entry name" value="PDZ domain-like"/>
    <property type="match status" value="1"/>
</dbReference>
<dbReference type="SUPFAM" id="SSF50044">
    <property type="entry name" value="SH3-domain"/>
    <property type="match status" value="1"/>
</dbReference>
<dbReference type="PROSITE" id="PS00856">
    <property type="entry name" value="GUANYLATE_KINASE_1"/>
    <property type="match status" value="1"/>
</dbReference>
<dbReference type="PROSITE" id="PS50052">
    <property type="entry name" value="GUANYLATE_KINASE_2"/>
    <property type="match status" value="1"/>
</dbReference>
<dbReference type="PROSITE" id="PS51022">
    <property type="entry name" value="L27"/>
    <property type="match status" value="2"/>
</dbReference>
<dbReference type="PROSITE" id="PS50106">
    <property type="entry name" value="PDZ"/>
    <property type="match status" value="1"/>
</dbReference>
<dbReference type="PROSITE" id="PS50002">
    <property type="entry name" value="SH3"/>
    <property type="match status" value="1"/>
</dbReference>
<reference key="1">
    <citation type="journal article" date="2001" name="Biochim. Biophys. Acta">
        <title>VAM-1: a new member of the MAGUK family binds to human Veli-1 through a conserved domain.</title>
        <authorList>
            <person name="Tseng T.-C."/>
            <person name="Marfatia S.M."/>
            <person name="Bryant P.J."/>
            <person name="Pack S."/>
            <person name="Zhuang Z."/>
            <person name="O'Brien J.E."/>
            <person name="Lin L."/>
            <person name="Hanada T."/>
            <person name="Chishti A.H."/>
        </authorList>
    </citation>
    <scope>NUCLEOTIDE SEQUENCE [MRNA]</scope>
</reference>
<reference key="2">
    <citation type="journal article" date="2001" name="Genome Res.">
        <title>Towards a catalog of human genes and proteins: sequencing and analysis of 500 novel complete protein coding human cDNAs.</title>
        <authorList>
            <person name="Wiemann S."/>
            <person name="Weil B."/>
            <person name="Wellenreuther R."/>
            <person name="Gassenhuber J."/>
            <person name="Glassl S."/>
            <person name="Ansorge W."/>
            <person name="Boecher M."/>
            <person name="Bloecker H."/>
            <person name="Bauersachs S."/>
            <person name="Blum H."/>
            <person name="Lauber J."/>
            <person name="Duesterhoeft A."/>
            <person name="Beyer A."/>
            <person name="Koehrer K."/>
            <person name="Strack N."/>
            <person name="Mewes H.-W."/>
            <person name="Ottenwaelder B."/>
            <person name="Obermaier B."/>
            <person name="Tampe J."/>
            <person name="Heubner D."/>
            <person name="Wambutt R."/>
            <person name="Korn B."/>
            <person name="Klein M."/>
            <person name="Poustka A."/>
        </authorList>
    </citation>
    <scope>NUCLEOTIDE SEQUENCE [LARGE SCALE MRNA]</scope>
    <source>
        <tissue>Testis</tissue>
    </source>
</reference>
<reference key="3">
    <citation type="journal article" date="2003" name="Science">
        <title>Human chromosome 7: DNA sequence and biology.</title>
        <authorList>
            <person name="Scherer S.W."/>
            <person name="Cheung J."/>
            <person name="MacDonald J.R."/>
            <person name="Osborne L.R."/>
            <person name="Nakabayashi K."/>
            <person name="Herbrick J.-A."/>
            <person name="Carson A.R."/>
            <person name="Parker-Katiraee L."/>
            <person name="Skaug J."/>
            <person name="Khaja R."/>
            <person name="Zhang J."/>
            <person name="Hudek A.K."/>
            <person name="Li M."/>
            <person name="Haddad M."/>
            <person name="Duggan G.E."/>
            <person name="Fernandez B.A."/>
            <person name="Kanematsu E."/>
            <person name="Gentles S."/>
            <person name="Christopoulos C.C."/>
            <person name="Choufani S."/>
            <person name="Kwasnicka D."/>
            <person name="Zheng X.H."/>
            <person name="Lai Z."/>
            <person name="Nusskern D.R."/>
            <person name="Zhang Q."/>
            <person name="Gu Z."/>
            <person name="Lu F."/>
            <person name="Zeesman S."/>
            <person name="Nowaczyk M.J."/>
            <person name="Teshima I."/>
            <person name="Chitayat D."/>
            <person name="Shuman C."/>
            <person name="Weksberg R."/>
            <person name="Zackai E.H."/>
            <person name="Grebe T.A."/>
            <person name="Cox S.R."/>
            <person name="Kirkpatrick S.J."/>
            <person name="Rahman N."/>
            <person name="Friedman J.M."/>
            <person name="Heng H.H.Q."/>
            <person name="Pelicci P.G."/>
            <person name="Lo-Coco F."/>
            <person name="Belloni E."/>
            <person name="Shaffer L.G."/>
            <person name="Pober B."/>
            <person name="Morton C.C."/>
            <person name="Gusella J.F."/>
            <person name="Bruns G.A.P."/>
            <person name="Korf B.R."/>
            <person name="Quade B.J."/>
            <person name="Ligon A.H."/>
            <person name="Ferguson H."/>
            <person name="Higgins A.W."/>
            <person name="Leach N.T."/>
            <person name="Herrick S.R."/>
            <person name="Lemyre E."/>
            <person name="Farra C.G."/>
            <person name="Kim H.-G."/>
            <person name="Summers A.M."/>
            <person name="Gripp K.W."/>
            <person name="Roberts W."/>
            <person name="Szatmari P."/>
            <person name="Winsor E.J.T."/>
            <person name="Grzeschik K.-H."/>
            <person name="Teebi A."/>
            <person name="Minassian B.A."/>
            <person name="Kere J."/>
            <person name="Armengol L."/>
            <person name="Pujana M.A."/>
            <person name="Estivill X."/>
            <person name="Wilson M.D."/>
            <person name="Koop B.F."/>
            <person name="Tosi S."/>
            <person name="Moore G.E."/>
            <person name="Boright A.P."/>
            <person name="Zlotorynski E."/>
            <person name="Kerem B."/>
            <person name="Kroisel P.M."/>
            <person name="Petek E."/>
            <person name="Oscier D.G."/>
            <person name="Mould S.J."/>
            <person name="Doehner H."/>
            <person name="Doehner K."/>
            <person name="Rommens J.M."/>
            <person name="Vincent J.B."/>
            <person name="Venter J.C."/>
            <person name="Li P.W."/>
            <person name="Mural R.J."/>
            <person name="Adams M.D."/>
            <person name="Tsui L.-C."/>
        </authorList>
    </citation>
    <scope>NUCLEOTIDE SEQUENCE [LARGE SCALE GENOMIC DNA]</scope>
</reference>
<reference key="4">
    <citation type="submission" date="2005-07" db="EMBL/GenBank/DDBJ databases">
        <authorList>
            <person name="Mural R.J."/>
            <person name="Istrail S."/>
            <person name="Sutton G.G."/>
            <person name="Florea L."/>
            <person name="Halpern A.L."/>
            <person name="Mobarry C.M."/>
            <person name="Lippert R."/>
            <person name="Walenz B."/>
            <person name="Shatkay H."/>
            <person name="Dew I."/>
            <person name="Miller J.R."/>
            <person name="Flanigan M.J."/>
            <person name="Edwards N.J."/>
            <person name="Bolanos R."/>
            <person name="Fasulo D."/>
            <person name="Halldorsson B.V."/>
            <person name="Hannenhalli S."/>
            <person name="Turner R."/>
            <person name="Yooseph S."/>
            <person name="Lu F."/>
            <person name="Nusskern D.R."/>
            <person name="Shue B.C."/>
            <person name="Zheng X.H."/>
            <person name="Zhong F."/>
            <person name="Delcher A.L."/>
            <person name="Huson D.H."/>
            <person name="Kravitz S.A."/>
            <person name="Mouchard L."/>
            <person name="Reinert K."/>
            <person name="Remington K.A."/>
            <person name="Clark A.G."/>
            <person name="Waterman M.S."/>
            <person name="Eichler E.E."/>
            <person name="Adams M.D."/>
            <person name="Hunkapiller M.W."/>
            <person name="Myers E.W."/>
            <person name="Venter J.C."/>
        </authorList>
    </citation>
    <scope>NUCLEOTIDE SEQUENCE [LARGE SCALE GENOMIC DNA]</scope>
</reference>
<reference key="5">
    <citation type="journal article" date="2003" name="Nature">
        <title>The DNA sequence of human chromosome 7.</title>
        <authorList>
            <person name="Hillier L.W."/>
            <person name="Fulton R.S."/>
            <person name="Fulton L.A."/>
            <person name="Graves T.A."/>
            <person name="Pepin K.H."/>
            <person name="Wagner-McPherson C."/>
            <person name="Layman D."/>
            <person name="Maas J."/>
            <person name="Jaeger S."/>
            <person name="Walker R."/>
            <person name="Wylie K."/>
            <person name="Sekhon M."/>
            <person name="Becker M.C."/>
            <person name="O'Laughlin M.D."/>
            <person name="Schaller M.E."/>
            <person name="Fewell G.A."/>
            <person name="Delehaunty K.D."/>
            <person name="Miner T.L."/>
            <person name="Nash W.E."/>
            <person name="Cordes M."/>
            <person name="Du H."/>
            <person name="Sun H."/>
            <person name="Edwards J."/>
            <person name="Bradshaw-Cordum H."/>
            <person name="Ali J."/>
            <person name="Andrews S."/>
            <person name="Isak A."/>
            <person name="Vanbrunt A."/>
            <person name="Nguyen C."/>
            <person name="Du F."/>
            <person name="Lamar B."/>
            <person name="Courtney L."/>
            <person name="Kalicki J."/>
            <person name="Ozersky P."/>
            <person name="Bielicki L."/>
            <person name="Scott K."/>
            <person name="Holmes A."/>
            <person name="Harkins R."/>
            <person name="Harris A."/>
            <person name="Strong C.M."/>
            <person name="Hou S."/>
            <person name="Tomlinson C."/>
            <person name="Dauphin-Kohlberg S."/>
            <person name="Kozlowicz-Reilly A."/>
            <person name="Leonard S."/>
            <person name="Rohlfing T."/>
            <person name="Rock S.M."/>
            <person name="Tin-Wollam A.-M."/>
            <person name="Abbott A."/>
            <person name="Minx P."/>
            <person name="Maupin R."/>
            <person name="Strowmatt C."/>
            <person name="Latreille P."/>
            <person name="Miller N."/>
            <person name="Johnson D."/>
            <person name="Murray J."/>
            <person name="Woessner J.P."/>
            <person name="Wendl M.C."/>
            <person name="Yang S.-P."/>
            <person name="Schultz B.R."/>
            <person name="Wallis J.W."/>
            <person name="Spieth J."/>
            <person name="Bieri T.A."/>
            <person name="Nelson J.O."/>
            <person name="Berkowicz N."/>
            <person name="Wohldmann P.E."/>
            <person name="Cook L.L."/>
            <person name="Hickenbotham M.T."/>
            <person name="Eldred J."/>
            <person name="Williams D."/>
            <person name="Bedell J.A."/>
            <person name="Mardis E.R."/>
            <person name="Clifton S.W."/>
            <person name="Chissoe S.L."/>
            <person name="Marra M.A."/>
            <person name="Raymond C."/>
            <person name="Haugen E."/>
            <person name="Gillett W."/>
            <person name="Zhou Y."/>
            <person name="James R."/>
            <person name="Phelps K."/>
            <person name="Iadanoto S."/>
            <person name="Bubb K."/>
            <person name="Simms E."/>
            <person name="Levy R."/>
            <person name="Clendenning J."/>
            <person name="Kaul R."/>
            <person name="Kent W.J."/>
            <person name="Furey T.S."/>
            <person name="Baertsch R.A."/>
            <person name="Brent M.R."/>
            <person name="Keibler E."/>
            <person name="Flicek P."/>
            <person name="Bork P."/>
            <person name="Suyama M."/>
            <person name="Bailey J.A."/>
            <person name="Portnoy M.E."/>
            <person name="Torrents D."/>
            <person name="Chinwalla A.T."/>
            <person name="Gish W.R."/>
            <person name="Eddy S.R."/>
            <person name="McPherson J.D."/>
            <person name="Olson M.V."/>
            <person name="Eichler E.E."/>
            <person name="Green E.D."/>
            <person name="Waterston R.H."/>
            <person name="Wilson R.K."/>
        </authorList>
    </citation>
    <scope>NUCLEOTIDE SEQUENCE [LARGE SCALE GENOMIC DNA]</scope>
</reference>
<reference key="6">
    <citation type="journal article" date="2004" name="Genome Res.">
        <title>The status, quality, and expansion of the NIH full-length cDNA project: the Mammalian Gene Collection (MGC).</title>
        <authorList>
            <consortium name="The MGC Project Team"/>
        </authorList>
    </citation>
    <scope>NUCLEOTIDE SEQUENCE [LARGE SCALE MRNA]</scope>
    <source>
        <tissue>Eye</tissue>
    </source>
</reference>
<reference key="7">
    <citation type="journal article" date="2005" name="Nat. Biotechnol.">
        <title>Immunoaffinity profiling of tyrosine phosphorylation in cancer cells.</title>
        <authorList>
            <person name="Rush J."/>
            <person name="Moritz A."/>
            <person name="Lee K.A."/>
            <person name="Guo A."/>
            <person name="Goss V.L."/>
            <person name="Spek E.J."/>
            <person name="Zhang H."/>
            <person name="Zha X.-M."/>
            <person name="Polakiewicz R.D."/>
            <person name="Comb M.J."/>
        </authorList>
    </citation>
    <scope>PHOSPHORYLATION [LARGE SCALE ANALYSIS] AT TYR-500</scope>
    <scope>IDENTIFICATION BY MASS SPECTROMETRY [LARGE SCALE ANALYSIS]</scope>
</reference>
<reference key="8">
    <citation type="journal article" date="2011" name="BMC Syst. Biol.">
        <title>Initial characterization of the human central proteome.</title>
        <authorList>
            <person name="Burkard T.R."/>
            <person name="Planyavsky M."/>
            <person name="Kaupe I."/>
            <person name="Breitwieser F.P."/>
            <person name="Buerckstuemmer T."/>
            <person name="Bennett K.L."/>
            <person name="Superti-Furga G."/>
            <person name="Colinge J."/>
        </authorList>
    </citation>
    <scope>IDENTIFICATION BY MASS SPECTROMETRY [LARGE SCALE ANALYSIS]</scope>
</reference>
<proteinExistence type="evidence at protein level"/>
<protein>
    <recommendedName>
        <fullName evidence="7">Protein PALS2</fullName>
    </recommendedName>
    <alternativeName>
        <fullName>MAGUK p55 subfamily member 6</fullName>
    </alternativeName>
    <alternativeName>
        <fullName>Membrane protein, palmitoylated 6</fullName>
    </alternativeName>
    <alternativeName>
        <fullName evidence="6">Veli-associated MAGUK 1</fullName>
        <shortName evidence="6">VAM-1</shortName>
    </alternativeName>
</protein>
<accession>Q9NZW5</accession>
<accession>A4D157</accession>
<accession>Q9H0E1</accession>